<organismHost>
    <name type="scientific">Homo sapiens</name>
    <name type="common">Human</name>
    <dbReference type="NCBI Taxonomy" id="9606"/>
</organismHost>
<accession>P33801</accession>
<feature type="chain" id="PRO_0000086800" description="Serine/threonine-protein kinase 2">
    <location>
        <begin position="1"/>
        <end position="439"/>
    </location>
</feature>
<feature type="domain" description="Protein kinase" evidence="2">
    <location>
        <begin position="87"/>
        <end position="439"/>
    </location>
</feature>
<feature type="active site" description="Proton acceptor" evidence="2 3">
    <location>
        <position position="307"/>
    </location>
</feature>
<feature type="binding site" evidence="2">
    <location>
        <begin position="93"/>
        <end position="101"/>
    </location>
    <ligand>
        <name>ATP</name>
        <dbReference type="ChEBI" id="CHEBI:30616"/>
    </ligand>
</feature>
<feature type="binding site" evidence="2">
    <location>
        <position position="117"/>
    </location>
    <ligand>
        <name>ATP</name>
        <dbReference type="ChEBI" id="CHEBI:30616"/>
    </ligand>
</feature>
<dbReference type="EC" id="2.7.11.1"/>
<dbReference type="EMBL" id="X69198">
    <property type="protein sequence ID" value="CAA48975.1"/>
    <property type="molecule type" value="Genomic_DNA"/>
</dbReference>
<dbReference type="PIR" id="E36840">
    <property type="entry name" value="E36840"/>
</dbReference>
<dbReference type="RefSeq" id="NP_042078.1">
    <property type="nucleotide sequence ID" value="NC_001611.1"/>
</dbReference>
<dbReference type="GeneID" id="1486570"/>
<dbReference type="KEGG" id="vg:1486570"/>
<dbReference type="Proteomes" id="UP000002060">
    <property type="component" value="Segment"/>
</dbReference>
<dbReference type="GO" id="GO:0044165">
    <property type="term" value="C:host cell endoplasmic reticulum"/>
    <property type="evidence" value="ECO:0007669"/>
    <property type="project" value="UniProtKB-SubCell"/>
</dbReference>
<dbReference type="GO" id="GO:0044172">
    <property type="term" value="C:host cell endoplasmic reticulum-Golgi intermediate compartment"/>
    <property type="evidence" value="ECO:0007669"/>
    <property type="project" value="UniProtKB-SubCell"/>
</dbReference>
<dbReference type="GO" id="GO:0005524">
    <property type="term" value="F:ATP binding"/>
    <property type="evidence" value="ECO:0007669"/>
    <property type="project" value="UniProtKB-KW"/>
</dbReference>
<dbReference type="GO" id="GO:0106310">
    <property type="term" value="F:protein serine kinase activity"/>
    <property type="evidence" value="ECO:0007669"/>
    <property type="project" value="RHEA"/>
</dbReference>
<dbReference type="GO" id="GO:0004674">
    <property type="term" value="F:protein serine/threonine kinase activity"/>
    <property type="evidence" value="ECO:0007669"/>
    <property type="project" value="UniProtKB-KW"/>
</dbReference>
<dbReference type="InterPro" id="IPR008790">
    <property type="entry name" value="Poxvirus_ser/thr_kinase"/>
</dbReference>
<dbReference type="InterPro" id="IPR000719">
    <property type="entry name" value="Prot_kinase_dom"/>
</dbReference>
<dbReference type="InterPro" id="IPR008271">
    <property type="entry name" value="Ser/Thr_kinase_AS"/>
</dbReference>
<dbReference type="Pfam" id="PF05445">
    <property type="entry name" value="Pox_ser-thr_kin"/>
    <property type="match status" value="1"/>
</dbReference>
<dbReference type="PIRSF" id="PIRSF015695">
    <property type="entry name" value="STPK_F10L"/>
    <property type="match status" value="1"/>
</dbReference>
<dbReference type="PROSITE" id="PS50011">
    <property type="entry name" value="PROTEIN_KINASE_DOM"/>
    <property type="match status" value="1"/>
</dbReference>
<dbReference type="PROSITE" id="PS00108">
    <property type="entry name" value="PROTEIN_KINASE_ST"/>
    <property type="match status" value="1"/>
</dbReference>
<evidence type="ECO:0000250" key="1">
    <source>
        <dbReference type="UniProtKB" id="Q89121"/>
    </source>
</evidence>
<evidence type="ECO:0000255" key="2">
    <source>
        <dbReference type="PROSITE-ProRule" id="PRU00159"/>
    </source>
</evidence>
<evidence type="ECO:0000255" key="3">
    <source>
        <dbReference type="PROSITE-ProRule" id="PRU10027"/>
    </source>
</evidence>
<sequence>MGVANDSSPEYQWMSPHRLSDTVILGDCLYFNNIMSQLDLHQNWAPSVRLLNYFKNFNRETLLKIEENDYINSSFFQQKDKRFYPINDDFYHISTGGYGIVFKIDNYVVKFVFEATKLYSPMETTAEFTVPKFLYNNLKGDEKKLIVCALAMGLNYKLTFLHTLYKRVLNMLLLLIQTMDGQELSLRYSSKVFLKAFNERKDSIKFVKLLSHFYPAVINSNINVINYFNRMFHFFEHEKRTNYEYERGNIIIFPLALYSADKVDTELAIKLGFKSLVQYIKFIFLQMALLYIKIYELPRCDNFLHADLKPDNILLFDSNEPIIIHLKDKKFVFNERIKSALNDFDFSQVAGIINKKIKNNFKVEHNWYYDFHFFVHTLLKTYPEIEKDIEFSTALEEFIMCTKTDCDKYRLKVSILHPISFLEKFIMRDIFSDWINGRN</sequence>
<name>VPK2_VAR67</name>
<gene>
    <name type="primary">OPG054</name>
    <name type="ORF">C14L</name>
    <name type="ORF">F10L</name>
</gene>
<comment type="function">
    <text evidence="1">Essential serine-protein kinase involved in the early stage of virion morphogenesis.</text>
</comment>
<comment type="catalytic activity">
    <reaction>
        <text>L-seryl-[protein] + ATP = O-phospho-L-seryl-[protein] + ADP + H(+)</text>
        <dbReference type="Rhea" id="RHEA:17989"/>
        <dbReference type="Rhea" id="RHEA-COMP:9863"/>
        <dbReference type="Rhea" id="RHEA-COMP:11604"/>
        <dbReference type="ChEBI" id="CHEBI:15378"/>
        <dbReference type="ChEBI" id="CHEBI:29999"/>
        <dbReference type="ChEBI" id="CHEBI:30616"/>
        <dbReference type="ChEBI" id="CHEBI:83421"/>
        <dbReference type="ChEBI" id="CHEBI:456216"/>
        <dbReference type="EC" id="2.7.11.1"/>
    </reaction>
</comment>
<comment type="catalytic activity">
    <reaction>
        <text>L-threonyl-[protein] + ATP = O-phospho-L-threonyl-[protein] + ADP + H(+)</text>
        <dbReference type="Rhea" id="RHEA:46608"/>
        <dbReference type="Rhea" id="RHEA-COMP:11060"/>
        <dbReference type="Rhea" id="RHEA-COMP:11605"/>
        <dbReference type="ChEBI" id="CHEBI:15378"/>
        <dbReference type="ChEBI" id="CHEBI:30013"/>
        <dbReference type="ChEBI" id="CHEBI:30616"/>
        <dbReference type="ChEBI" id="CHEBI:61977"/>
        <dbReference type="ChEBI" id="CHEBI:456216"/>
        <dbReference type="EC" id="2.7.11.1"/>
    </reaction>
</comment>
<comment type="subcellular location">
    <subcellularLocation>
        <location evidence="1">Host endoplasmic reticulum</location>
    </subcellularLocation>
    <subcellularLocation>
        <location evidence="1">Host endoplasmic reticulum-Golgi intermediate compartment</location>
    </subcellularLocation>
</comment>
<comment type="PTM">
    <text evidence="1">Phosphorylated in vivo. Autophosphorylated in vitro.</text>
</comment>
<comment type="similarity">
    <text evidence="2">Belongs to the protein kinase superfamily. Ser/Thr protein kinase family. Poxviruses subfamily.</text>
</comment>
<organism>
    <name type="scientific">Variola virus (isolate Human/India/Ind3/1967)</name>
    <name type="common">VARV</name>
    <name type="synonym">Smallpox virus</name>
    <dbReference type="NCBI Taxonomy" id="587200"/>
    <lineage>
        <taxon>Viruses</taxon>
        <taxon>Varidnaviria</taxon>
        <taxon>Bamfordvirae</taxon>
        <taxon>Nucleocytoviricota</taxon>
        <taxon>Pokkesviricetes</taxon>
        <taxon>Chitovirales</taxon>
        <taxon>Poxviridae</taxon>
        <taxon>Chordopoxvirinae</taxon>
        <taxon>Orthopoxvirus</taxon>
        <taxon>Variola virus</taxon>
    </lineage>
</organism>
<protein>
    <recommendedName>
        <fullName>Serine/threonine-protein kinase 2</fullName>
        <ecNumber>2.7.11.1</ecNumber>
    </recommendedName>
</protein>
<proteinExistence type="inferred from homology"/>
<reference key="1">
    <citation type="journal article" date="1993" name="Virus Res.">
        <title>Analysis of the nucleotide sequence of a 43 kbp segment of the genome of variola virus India-1967 strain.</title>
        <authorList>
            <person name="Shchelkunov S.N."/>
            <person name="Blinov V.M."/>
            <person name="Resenchuk S.M."/>
            <person name="Totmenin A.V."/>
            <person name="Sandakhchiev L.S."/>
        </authorList>
    </citation>
    <scope>NUCLEOTIDE SEQUENCE [GENOMIC DNA]</scope>
    <source>
        <strain>India-1967 / Isolate Ind3</strain>
    </source>
</reference>
<reference key="2">
    <citation type="journal article" date="1993" name="FEBS Lett.">
        <title>Genes of variola and vaccinia viruses necessary to overcome the host protective mechanisms.</title>
        <authorList>
            <person name="Shchelkunov S.N."/>
            <person name="Blinov V.M."/>
            <person name="Sandakhchiev L.S."/>
        </authorList>
    </citation>
    <scope>COMPLETE GENOME</scope>
    <source>
        <strain>India-1967 / Isolate Ind3</strain>
    </source>
</reference>
<keyword id="KW-0067">ATP-binding</keyword>
<keyword id="KW-1038">Host endoplasmic reticulum</keyword>
<keyword id="KW-0418">Kinase</keyword>
<keyword id="KW-0426">Late protein</keyword>
<keyword id="KW-0547">Nucleotide-binding</keyword>
<keyword id="KW-0597">Phosphoprotein</keyword>
<keyword id="KW-1185">Reference proteome</keyword>
<keyword id="KW-0723">Serine/threonine-protein kinase</keyword>
<keyword id="KW-0808">Transferase</keyword>